<comment type="function">
    <text>Suppresses spontaneous contractions of the hindgut and oviduct.</text>
</comment>
<comment type="tissue specificity">
    <text>Neurons located in two ventral cell clusters in the subesophageal ganglion.</text>
</comment>
<accession>P31799</accession>
<feature type="peptide" id="PRO_0000044157" description="Locustamyoinhibiting peptide">
    <location>
        <begin position="1"/>
        <end position="9"/>
    </location>
</feature>
<feature type="modified residue" description="Tryptophan amide" evidence="1">
    <location>
        <position position="9"/>
    </location>
</feature>
<organism>
    <name type="scientific">Locusta migratoria</name>
    <name type="common">Migratory locust</name>
    <dbReference type="NCBI Taxonomy" id="7004"/>
    <lineage>
        <taxon>Eukaryota</taxon>
        <taxon>Metazoa</taxon>
        <taxon>Ecdysozoa</taxon>
        <taxon>Arthropoda</taxon>
        <taxon>Hexapoda</taxon>
        <taxon>Insecta</taxon>
        <taxon>Pterygota</taxon>
        <taxon>Neoptera</taxon>
        <taxon>Polyneoptera</taxon>
        <taxon>Orthoptera</taxon>
        <taxon>Caelifera</taxon>
        <taxon>Acrididea</taxon>
        <taxon>Acridomorpha</taxon>
        <taxon>Acridoidea</taxon>
        <taxon>Acrididae</taxon>
        <taxon>Oedipodinae</taxon>
        <taxon>Locusta</taxon>
    </lineage>
</organism>
<dbReference type="PIR" id="A60065">
    <property type="entry name" value="AKLQIM"/>
</dbReference>
<dbReference type="GO" id="GO:0007218">
    <property type="term" value="P:neuropeptide signaling pathway"/>
    <property type="evidence" value="ECO:0007669"/>
    <property type="project" value="UniProtKB-KW"/>
</dbReference>
<keyword id="KW-0027">Amidation</keyword>
<keyword id="KW-0903">Direct protein sequencing</keyword>
<keyword id="KW-0527">Neuropeptide</keyword>
<reference key="1">
    <citation type="journal article" date="1991" name="Regul. Pept.">
        <title>Isolation, identification and synthesis of locustamyoinhibiting peptide (LOM-MIP), a novel biologically active neuropeptide from Locusta migratoria.</title>
        <authorList>
            <person name="Schoofs L."/>
            <person name="Holman G.M."/>
            <person name="Hayes T.K."/>
            <person name="Nachman R.J."/>
            <person name="de Loof A."/>
        </authorList>
    </citation>
    <scope>PROTEIN SEQUENCE</scope>
    <scope>AMIDATION AT TRP-9</scope>
</reference>
<protein>
    <recommendedName>
        <fullName>Locustamyoinhibiting peptide</fullName>
    </recommendedName>
    <alternativeName>
        <fullName>LOM-MIP</fullName>
    </alternativeName>
</protein>
<proteinExistence type="evidence at protein level"/>
<name>LMIP_LOCMI</name>
<evidence type="ECO:0000269" key="1">
    <source>
    </source>
</evidence>
<sequence length="9" mass="1060">AWQDLNAGW</sequence>